<gene>
    <name evidence="7" type="primary">pccA</name>
    <name evidence="7" type="ordered locus">SPO1101</name>
</gene>
<accession>Q5LUF3</accession>
<organism>
    <name type="scientific">Ruegeria pomeroyi (strain ATCC 700808 / DSM 15171 / DSS-3)</name>
    <name type="common">Silicibacter pomeroyi</name>
    <dbReference type="NCBI Taxonomy" id="246200"/>
    <lineage>
        <taxon>Bacteria</taxon>
        <taxon>Pseudomonadati</taxon>
        <taxon>Pseudomonadota</taxon>
        <taxon>Alphaproteobacteria</taxon>
        <taxon>Rhodobacterales</taxon>
        <taxon>Roseobacteraceae</taxon>
        <taxon>Ruegeria</taxon>
    </lineage>
</organism>
<feature type="chain" id="PRO_0000448576" description="Propionyl-CoA carboxylase alpha chain">
    <location>
        <begin position="1"/>
        <end position="681"/>
    </location>
</feature>
<feature type="domain" description="Biotin carboxylation" evidence="3">
    <location>
        <begin position="1"/>
        <end position="466"/>
    </location>
</feature>
<feature type="domain" description="ATP-grasp" evidence="2 3">
    <location>
        <begin position="120"/>
        <end position="317"/>
    </location>
</feature>
<feature type="domain" description="Biotinyl-binding" evidence="4">
    <location>
        <begin position="602"/>
        <end position="681"/>
    </location>
</feature>
<feature type="active site" evidence="1">
    <location>
        <position position="288"/>
    </location>
</feature>
<feature type="binding site" evidence="1">
    <location>
        <position position="116"/>
    </location>
    <ligand>
        <name>ATP</name>
        <dbReference type="ChEBI" id="CHEBI:30616"/>
    </ligand>
</feature>
<feature type="binding site" evidence="2">
    <location>
        <begin position="148"/>
        <end position="209"/>
    </location>
    <ligand>
        <name>ATP</name>
        <dbReference type="ChEBI" id="CHEBI:30616"/>
    </ligand>
</feature>
<feature type="binding site" evidence="1">
    <location>
        <position position="200"/>
    </location>
    <ligand>
        <name>ATP</name>
        <dbReference type="ChEBI" id="CHEBI:30616"/>
    </ligand>
</feature>
<feature type="binding site" evidence="1">
    <location>
        <position position="235"/>
    </location>
    <ligand>
        <name>ATP</name>
        <dbReference type="ChEBI" id="CHEBI:30616"/>
    </ligand>
</feature>
<feature type="binding site" evidence="2 3">
    <location>
        <position position="275"/>
    </location>
    <ligand>
        <name>Mg(2+)</name>
        <dbReference type="ChEBI" id="CHEBI:18420"/>
        <label>1</label>
    </ligand>
</feature>
<feature type="binding site" evidence="2 3">
    <location>
        <position position="275"/>
    </location>
    <ligand>
        <name>Mn(2+)</name>
        <dbReference type="ChEBI" id="CHEBI:29035"/>
        <label>1</label>
    </ligand>
</feature>
<feature type="binding site" evidence="2 3">
    <location>
        <position position="288"/>
    </location>
    <ligand>
        <name>Mg(2+)</name>
        <dbReference type="ChEBI" id="CHEBI:18420"/>
        <label>1</label>
    </ligand>
</feature>
<feature type="binding site" evidence="2 3">
    <location>
        <position position="288"/>
    </location>
    <ligand>
        <name>Mg(2+)</name>
        <dbReference type="ChEBI" id="CHEBI:18420"/>
        <label>2</label>
    </ligand>
</feature>
<feature type="binding site" evidence="2 3">
    <location>
        <position position="288"/>
    </location>
    <ligand>
        <name>Mn(2+)</name>
        <dbReference type="ChEBI" id="CHEBI:29035"/>
        <label>1</label>
    </ligand>
</feature>
<feature type="binding site" evidence="2 3">
    <location>
        <position position="288"/>
    </location>
    <ligand>
        <name>Mn(2+)</name>
        <dbReference type="ChEBI" id="CHEBI:29035"/>
        <label>2</label>
    </ligand>
</feature>
<feature type="binding site" evidence="2 3">
    <location>
        <position position="290"/>
    </location>
    <ligand>
        <name>Mg(2+)</name>
        <dbReference type="ChEBI" id="CHEBI:18420"/>
        <label>2</label>
    </ligand>
</feature>
<feature type="binding site" evidence="2 3">
    <location>
        <position position="290"/>
    </location>
    <ligand>
        <name>Mn(2+)</name>
        <dbReference type="ChEBI" id="CHEBI:29035"/>
        <label>2</label>
    </ligand>
</feature>
<feature type="binding site" evidence="5 8">
    <location>
        <position position="348"/>
    </location>
    <ligand>
        <name>biotin</name>
        <dbReference type="ChEBI" id="CHEBI:57586"/>
    </ligand>
</feature>
<feature type="modified residue" description="N6-biotinyllysine" evidence="4 5 8">
    <location>
        <position position="647"/>
    </location>
</feature>
<feature type="mutagenesis site" description="No effect on holoenzyme formation." evidence="5">
    <original>W</original>
    <variation>L</variation>
    <location>
        <position position="515"/>
    </location>
</feature>
<feature type="mutagenesis site" description="Loss of holoenzyme formation; when associated with A-602 and A-603." evidence="5">
    <original>L</original>
    <variation>A</variation>
    <location>
        <position position="599"/>
    </location>
</feature>
<feature type="mutagenesis site" description="Loss of holoenzyme formation; when associated with A-602 and A-603." evidence="5">
    <original>L</original>
    <variation>A</variation>
    <location>
        <position position="602"/>
    </location>
</feature>
<feature type="mutagenesis site" description="No effect on holoenzyme formation. Loss of holoenzyme formation; when associated with A-602 and A-603." evidence="5">
    <original>M</original>
    <variation>A</variation>
    <location>
        <position position="603"/>
    </location>
</feature>
<feature type="helix" evidence="9">
    <location>
        <begin position="11"/>
        <end position="21"/>
    </location>
</feature>
<feature type="helix" evidence="9">
    <location>
        <begin position="22"/>
        <end position="24"/>
    </location>
</feature>
<feature type="helix" evidence="9">
    <location>
        <begin position="40"/>
        <end position="44"/>
    </location>
</feature>
<feature type="strand" evidence="9">
    <location>
        <begin position="52"/>
        <end position="55"/>
    </location>
</feature>
<feature type="helix" evidence="9">
    <location>
        <begin position="56"/>
        <end position="58"/>
    </location>
</feature>
<feature type="helix" evidence="9">
    <location>
        <begin position="63"/>
        <end position="72"/>
    </location>
</feature>
<feature type="strand" evidence="9">
    <location>
        <begin position="82"/>
        <end position="85"/>
    </location>
</feature>
<feature type="helix" evidence="9">
    <location>
        <begin position="89"/>
        <end position="96"/>
    </location>
</feature>
<feature type="turn" evidence="9">
    <location>
        <begin position="97"/>
        <end position="99"/>
    </location>
</feature>
<feature type="strand" evidence="9">
    <location>
        <begin position="103"/>
        <end position="105"/>
    </location>
</feature>
<feature type="helix" evidence="9">
    <location>
        <begin position="107"/>
        <end position="112"/>
    </location>
</feature>
<feature type="helix" evidence="9">
    <location>
        <begin position="116"/>
        <end position="124"/>
    </location>
</feature>
<feature type="turn" evidence="9">
    <location>
        <begin position="125"/>
        <end position="127"/>
    </location>
</feature>
<feature type="strand" evidence="9">
    <location>
        <begin position="134"/>
        <end position="136"/>
    </location>
</feature>
<feature type="helix" evidence="9">
    <location>
        <begin position="141"/>
        <end position="151"/>
    </location>
</feature>
<feature type="strand" evidence="9">
    <location>
        <begin position="153"/>
        <end position="159"/>
    </location>
</feature>
<feature type="helix" evidence="9">
    <location>
        <begin position="174"/>
        <end position="184"/>
    </location>
</feature>
<feature type="strand" evidence="9">
    <location>
        <begin position="197"/>
        <end position="201"/>
    </location>
</feature>
<feature type="strand" evidence="9">
    <location>
        <begin position="207"/>
        <end position="214"/>
    </location>
</feature>
<feature type="strand" evidence="9">
    <location>
        <begin position="217"/>
        <end position="219"/>
    </location>
</feature>
<feature type="strand" evidence="9">
    <location>
        <begin position="222"/>
        <end position="228"/>
    </location>
</feature>
<feature type="strand" evidence="9">
    <location>
        <begin position="239"/>
        <end position="243"/>
    </location>
</feature>
<feature type="helix" evidence="9">
    <location>
        <begin position="249"/>
        <end position="264"/>
    </location>
</feature>
<feature type="turn" evidence="9">
    <location>
        <begin position="265"/>
        <end position="267"/>
    </location>
</feature>
<feature type="strand" evidence="9">
    <location>
        <begin position="270"/>
        <end position="278"/>
    </location>
</feature>
<feature type="strand" evidence="9">
    <location>
        <begin position="288"/>
        <end position="290"/>
    </location>
</feature>
<feature type="helix" evidence="9">
    <location>
        <begin position="297"/>
        <end position="304"/>
    </location>
</feature>
<feature type="helix" evidence="9">
    <location>
        <begin position="308"/>
        <end position="316"/>
    </location>
</feature>
<feature type="turn" evidence="9">
    <location>
        <begin position="325"/>
        <end position="327"/>
    </location>
</feature>
<feature type="strand" evidence="9">
    <location>
        <begin position="332"/>
        <end position="343"/>
    </location>
</feature>
<feature type="helix" evidence="9">
    <location>
        <begin position="344"/>
        <end position="346"/>
    </location>
</feature>
<feature type="strand" evidence="9">
    <location>
        <begin position="386"/>
        <end position="391"/>
    </location>
</feature>
<feature type="strand" evidence="9">
    <location>
        <begin position="405"/>
        <end position="415"/>
    </location>
</feature>
<feature type="helix" evidence="9">
    <location>
        <begin position="416"/>
        <end position="429"/>
    </location>
</feature>
<feature type="helix" evidence="9">
    <location>
        <begin position="439"/>
        <end position="447"/>
    </location>
</feature>
<feature type="helix" evidence="9">
    <location>
        <begin position="449"/>
        <end position="453"/>
    </location>
</feature>
<feature type="helix" evidence="9">
    <location>
        <begin position="460"/>
        <end position="464"/>
    </location>
</feature>
<feature type="helix" evidence="9">
    <location>
        <begin position="476"/>
        <end position="497"/>
    </location>
</feature>
<feature type="strand" evidence="9">
    <location>
        <begin position="513"/>
        <end position="518"/>
    </location>
</feature>
<feature type="strand" evidence="9">
    <location>
        <begin position="523"/>
        <end position="530"/>
    </location>
</feature>
<feature type="strand" evidence="9">
    <location>
        <begin position="535"/>
        <end position="539"/>
    </location>
</feature>
<feature type="strand" evidence="9">
    <location>
        <begin position="544"/>
        <end position="549"/>
    </location>
</feature>
<feature type="strand" evidence="9">
    <location>
        <begin position="556"/>
        <end position="562"/>
    </location>
</feature>
<feature type="strand" evidence="9">
    <location>
        <begin position="565"/>
        <end position="574"/>
    </location>
</feature>
<feature type="strand" evidence="9">
    <location>
        <begin position="577"/>
        <end position="581"/>
    </location>
</feature>
<feature type="strand" evidence="9">
    <location>
        <begin position="587"/>
        <end position="592"/>
    </location>
</feature>
<feature type="helix" evidence="9">
    <location>
        <begin position="594"/>
        <end position="600"/>
    </location>
</feature>
<feature type="strand" evidence="9">
    <location>
        <begin position="613"/>
        <end position="616"/>
    </location>
</feature>
<feature type="strand" evidence="9">
    <location>
        <begin position="621"/>
        <end position="626"/>
    </location>
</feature>
<feature type="strand" evidence="9">
    <location>
        <begin position="639"/>
        <end position="644"/>
    </location>
</feature>
<feature type="strand" evidence="9">
    <location>
        <begin position="649"/>
        <end position="653"/>
    </location>
</feature>
<feature type="strand" evidence="9">
    <location>
        <begin position="655"/>
        <end position="663"/>
    </location>
</feature>
<feature type="strand" evidence="9">
    <location>
        <begin position="676"/>
        <end position="680"/>
    </location>
</feature>
<dbReference type="EC" id="6.4.1.3" evidence="5"/>
<dbReference type="EMBL" id="CP000031">
    <property type="protein sequence ID" value="AAV94401.1"/>
    <property type="molecule type" value="Genomic_DNA"/>
</dbReference>
<dbReference type="RefSeq" id="WP_011046848.1">
    <property type="nucleotide sequence ID" value="NC_003911.12"/>
</dbReference>
<dbReference type="PDB" id="3N6R">
    <property type="method" value="X-ray"/>
    <property type="resolution" value="3.20 A"/>
    <property type="chains" value="A/C/E/G/I/K=1-681"/>
</dbReference>
<dbReference type="PDBsum" id="3N6R"/>
<dbReference type="SMR" id="Q5LUF3"/>
<dbReference type="DIP" id="DIP-59242N"/>
<dbReference type="IntAct" id="Q5LUF3">
    <property type="interactions" value="2"/>
</dbReference>
<dbReference type="STRING" id="246200.SPO1101"/>
<dbReference type="PaxDb" id="246200-SPO1101"/>
<dbReference type="DNASU" id="3193848"/>
<dbReference type="KEGG" id="sil:SPO1101"/>
<dbReference type="eggNOG" id="COG4770">
    <property type="taxonomic scope" value="Bacteria"/>
</dbReference>
<dbReference type="HOGENOM" id="CLU_000395_3_3_5"/>
<dbReference type="OrthoDB" id="9763189at2"/>
<dbReference type="BRENDA" id="6.4.1.3">
    <property type="organism ID" value="8123"/>
</dbReference>
<dbReference type="UniPathway" id="UPA00945">
    <property type="reaction ID" value="UER00908"/>
</dbReference>
<dbReference type="EvolutionaryTrace" id="Q5LUF3"/>
<dbReference type="Proteomes" id="UP000001023">
    <property type="component" value="Chromosome"/>
</dbReference>
<dbReference type="GO" id="GO:0005524">
    <property type="term" value="F:ATP binding"/>
    <property type="evidence" value="ECO:0007669"/>
    <property type="project" value="UniProtKB-KW"/>
</dbReference>
<dbReference type="GO" id="GO:0046872">
    <property type="term" value="F:metal ion binding"/>
    <property type="evidence" value="ECO:0007669"/>
    <property type="project" value="UniProtKB-KW"/>
</dbReference>
<dbReference type="GO" id="GO:0004658">
    <property type="term" value="F:propionyl-CoA carboxylase activity"/>
    <property type="evidence" value="ECO:0007669"/>
    <property type="project" value="UniProtKB-EC"/>
</dbReference>
<dbReference type="GO" id="GO:0016042">
    <property type="term" value="P:lipid catabolic process"/>
    <property type="evidence" value="ECO:0007669"/>
    <property type="project" value="UniProtKB-KW"/>
</dbReference>
<dbReference type="CDD" id="cd06850">
    <property type="entry name" value="biotinyl_domain"/>
    <property type="match status" value="1"/>
</dbReference>
<dbReference type="FunFam" id="2.40.50.100:FF:000003">
    <property type="entry name" value="Acetyl-CoA carboxylase biotin carboxyl carrier protein"/>
    <property type="match status" value="1"/>
</dbReference>
<dbReference type="FunFam" id="3.30.1490.20:FF:000018">
    <property type="entry name" value="Biotin carboxylase"/>
    <property type="match status" value="1"/>
</dbReference>
<dbReference type="FunFam" id="3.30.470.20:FF:000028">
    <property type="entry name" value="Methylcrotonoyl-CoA carboxylase subunit alpha, mitochondrial"/>
    <property type="match status" value="1"/>
</dbReference>
<dbReference type="FunFam" id="3.40.50.20:FF:000010">
    <property type="entry name" value="Propionyl-CoA carboxylase subunit alpha"/>
    <property type="match status" value="1"/>
</dbReference>
<dbReference type="FunFam" id="3.30.700.30:FF:000002">
    <property type="entry name" value="Propionyl-CoA carboxylase, alpha subunit"/>
    <property type="match status" value="1"/>
</dbReference>
<dbReference type="Gene3D" id="2.40.50.100">
    <property type="match status" value="1"/>
</dbReference>
<dbReference type="Gene3D" id="3.30.700.30">
    <property type="match status" value="1"/>
</dbReference>
<dbReference type="Gene3D" id="3.30.470.20">
    <property type="entry name" value="ATP-grasp fold, B domain"/>
    <property type="match status" value="1"/>
</dbReference>
<dbReference type="InterPro" id="IPR011761">
    <property type="entry name" value="ATP-grasp"/>
</dbReference>
<dbReference type="InterPro" id="IPR005481">
    <property type="entry name" value="BC-like_N"/>
</dbReference>
<dbReference type="InterPro" id="IPR001882">
    <property type="entry name" value="Biotin_BS"/>
</dbReference>
<dbReference type="InterPro" id="IPR050856">
    <property type="entry name" value="Biotin_carboxylase_complex"/>
</dbReference>
<dbReference type="InterPro" id="IPR011764">
    <property type="entry name" value="Biotin_carboxylation_dom"/>
</dbReference>
<dbReference type="InterPro" id="IPR005482">
    <property type="entry name" value="Biotin_COase_C"/>
</dbReference>
<dbReference type="InterPro" id="IPR000089">
    <property type="entry name" value="Biotin_lipoyl"/>
</dbReference>
<dbReference type="InterPro" id="IPR005479">
    <property type="entry name" value="CbamoylP_synth_lsu-like_ATP-bd"/>
</dbReference>
<dbReference type="InterPro" id="IPR041265">
    <property type="entry name" value="PCC_BT"/>
</dbReference>
<dbReference type="InterPro" id="IPR016185">
    <property type="entry name" value="PreATP-grasp_dom_sf"/>
</dbReference>
<dbReference type="InterPro" id="IPR011054">
    <property type="entry name" value="Rudment_hybrid_motif"/>
</dbReference>
<dbReference type="InterPro" id="IPR011053">
    <property type="entry name" value="Single_hybrid_motif"/>
</dbReference>
<dbReference type="PANTHER" id="PTHR18866">
    <property type="entry name" value="CARBOXYLASE:PYRUVATE/ACETYL-COA/PROPIONYL-COA CARBOXYLASE"/>
    <property type="match status" value="1"/>
</dbReference>
<dbReference type="PANTHER" id="PTHR18866:SF33">
    <property type="entry name" value="METHYLCROTONOYL-COA CARBOXYLASE SUBUNIT ALPHA, MITOCHONDRIAL-RELATED"/>
    <property type="match status" value="1"/>
</dbReference>
<dbReference type="Pfam" id="PF02785">
    <property type="entry name" value="Biotin_carb_C"/>
    <property type="match status" value="1"/>
</dbReference>
<dbReference type="Pfam" id="PF00289">
    <property type="entry name" value="Biotin_carb_N"/>
    <property type="match status" value="1"/>
</dbReference>
<dbReference type="Pfam" id="PF00364">
    <property type="entry name" value="Biotin_lipoyl"/>
    <property type="match status" value="1"/>
</dbReference>
<dbReference type="Pfam" id="PF02786">
    <property type="entry name" value="CPSase_L_D2"/>
    <property type="match status" value="1"/>
</dbReference>
<dbReference type="Pfam" id="PF18140">
    <property type="entry name" value="PCC_BT"/>
    <property type="match status" value="1"/>
</dbReference>
<dbReference type="SMART" id="SM00878">
    <property type="entry name" value="Biotin_carb_C"/>
    <property type="match status" value="1"/>
</dbReference>
<dbReference type="SUPFAM" id="SSF56059">
    <property type="entry name" value="Glutathione synthetase ATP-binding domain-like"/>
    <property type="match status" value="1"/>
</dbReference>
<dbReference type="SUPFAM" id="SSF52440">
    <property type="entry name" value="PreATP-grasp domain"/>
    <property type="match status" value="1"/>
</dbReference>
<dbReference type="SUPFAM" id="SSF51246">
    <property type="entry name" value="Rudiment single hybrid motif"/>
    <property type="match status" value="1"/>
</dbReference>
<dbReference type="SUPFAM" id="SSF51230">
    <property type="entry name" value="Single hybrid motif"/>
    <property type="match status" value="1"/>
</dbReference>
<dbReference type="PROSITE" id="PS50975">
    <property type="entry name" value="ATP_GRASP"/>
    <property type="match status" value="1"/>
</dbReference>
<dbReference type="PROSITE" id="PS50979">
    <property type="entry name" value="BC"/>
    <property type="match status" value="1"/>
</dbReference>
<dbReference type="PROSITE" id="PS00188">
    <property type="entry name" value="BIOTIN"/>
    <property type="match status" value="1"/>
</dbReference>
<dbReference type="PROSITE" id="PS50968">
    <property type="entry name" value="BIOTINYL_LIPOYL"/>
    <property type="match status" value="1"/>
</dbReference>
<dbReference type="PROSITE" id="PS00866">
    <property type="entry name" value="CPSASE_1"/>
    <property type="match status" value="1"/>
</dbReference>
<dbReference type="PROSITE" id="PS00867">
    <property type="entry name" value="CPSASE_2"/>
    <property type="match status" value="1"/>
</dbReference>
<keyword id="KW-0002">3D-structure</keyword>
<keyword id="KW-0067">ATP-binding</keyword>
<keyword id="KW-0092">Biotin</keyword>
<keyword id="KW-0436">Ligase</keyword>
<keyword id="KW-0442">Lipid degradation</keyword>
<keyword id="KW-0443">Lipid metabolism</keyword>
<keyword id="KW-0460">Magnesium</keyword>
<keyword id="KW-0464">Manganese</keyword>
<keyword id="KW-0479">Metal-binding</keyword>
<keyword id="KW-0547">Nucleotide-binding</keyword>
<keyword id="KW-1185">Reference proteome</keyword>
<protein>
    <recommendedName>
        <fullName evidence="6">Propionyl-CoA carboxylase alpha chain</fullName>
        <ecNumber evidence="5">6.4.1.3</ecNumber>
    </recommendedName>
</protein>
<reference key="1">
    <citation type="journal article" date="2004" name="Nature">
        <title>Genome sequence of Silicibacter pomeroyi reveals adaptations to the marine environment.</title>
        <authorList>
            <person name="Moran M.A."/>
            <person name="Buchan A."/>
            <person name="Gonzalez J.M."/>
            <person name="Heidelberg J.F."/>
            <person name="Whitman W.B."/>
            <person name="Kiene R.P."/>
            <person name="Henriksen J.R."/>
            <person name="King G.M."/>
            <person name="Belas R."/>
            <person name="Fuqua C."/>
            <person name="Brinkac L.M."/>
            <person name="Lewis M."/>
            <person name="Johri S."/>
            <person name="Weaver B."/>
            <person name="Pai G."/>
            <person name="Eisen J.A."/>
            <person name="Rahe E."/>
            <person name="Sheldon W.M."/>
            <person name="Ye W."/>
            <person name="Miller T.R."/>
            <person name="Carlton J."/>
            <person name="Rasko D.A."/>
            <person name="Paulsen I.T."/>
            <person name="Ren Q."/>
            <person name="Daugherty S.C."/>
            <person name="DeBoy R.T."/>
            <person name="Dodson R.J."/>
            <person name="Durkin A.S."/>
            <person name="Madupu R."/>
            <person name="Nelson W.C."/>
            <person name="Sullivan S.A."/>
            <person name="Rosovitz M.J."/>
            <person name="Haft D.H."/>
            <person name="Selengut J."/>
            <person name="Ward N."/>
        </authorList>
    </citation>
    <scope>NUCLEOTIDE SEQUENCE [LARGE SCALE GENOMIC DNA]</scope>
    <source>
        <strain>ATCC 700808 / DSM 15171 / DSS-3</strain>
    </source>
</reference>
<reference key="2">
    <citation type="journal article" date="2014" name="Stand. Genomic Sci.">
        <title>An updated genome annotation for the model marine bacterium Ruegeria pomeroyi DSS-3.</title>
        <authorList>
            <person name="Rivers A.R."/>
            <person name="Smith C.B."/>
            <person name="Moran M.A."/>
        </authorList>
    </citation>
    <scope>GENOME REANNOTATION</scope>
    <source>
        <strain>ATCC 700808 / DSM 15171 / DSS-3</strain>
    </source>
</reference>
<reference key="3">
    <citation type="journal article" date="2010" name="Nature">
        <title>Crystal structure of the alpha(6)beta(6) holoenzyme of propionyl-coenzyme A carboxylase.</title>
        <authorList>
            <person name="Huang C.S."/>
            <person name="Sadre-Bazzaz K."/>
            <person name="Shen Y."/>
            <person name="Deng B."/>
            <person name="Zhou Z.H."/>
            <person name="Tong L."/>
        </authorList>
    </citation>
    <scope>X-RAY CRYSTALLOGRAPHY (3.20 ANGSTROMS) IN COMPLEX WITH BETA SUBUNIT FROM ROSEOBACTER AND BIOTIN</scope>
    <scope>FUNCTION</scope>
    <scope>CATALYTIC ACTIVITY</scope>
    <scope>COFACTOR</scope>
    <scope>PATHWAY</scope>
    <scope>SUBUNIT</scope>
    <scope>DOMAIN</scope>
    <scope>BIOTINYLATION AT LYS-647</scope>
    <scope>MUTAGENESIS OF TRP-515; LEU-599; LEU-602 AND MET-603</scope>
</reference>
<name>PCCA_RUEPO</name>
<proteinExistence type="evidence at protein level"/>
<sequence>MFNKILIANRGEIACRVIKTARKMGISTVAIYSDADKQALHVQMADEAVHIGPPPANQSYIVIDKVMAAIRATGAQAVHPGYGFLSENSKFAEALEAEGVIFVGPPKGAIEAMGDKITSKKIAQEANVSTVPGYMGLIEDADEAVKISNQIGYPVMIKASAGGGGKGMRIAWNDQEAREGFQSSKNEAANSFGDDRIFIEKFVTQPRHIEIQVLCDSHGNGIYLGERECSIQRRNQKVVEEAPSPFLDEATRRAMGEQAVALAKAVGYASAGTVEFIVDGQKNFYFLEMNTRLQVEHPVTELITGVDLVEQMIRVAAGEPLSITQGDVKLTGWAIENRLYAEDPYRGFLPSIGRLTRYRPPAETAAGPLLVNGKWQGDAPSGEAAVRNDTGVYEGGEISMYYDPMIAKLCTWAPTRAAAIEAMRIALDSFEVEGIGHNLPFLSAVMDHPKFISGDMTTAFIAEEYPEGFEGVNLPETDLRRVAAAAAAMHRVAEIRRTRVSGRMDNHERRVGTEWVVTLQGADFPVTIAADHDGSTVSFDDGSSMRVTSDWTPGDQLANLMVDGAPLVLKVGKISGGFRIRTRGADLKVHVRTPRQAELARLMPEKLPPDTSKMLLCPMPGLIVKVDVEVGQEVQEGQALCTIEAMKMENILRAEKKGVVAKINASAGNSLAVDDVIMEFE</sequence>
<comment type="function">
    <text evidence="5 6">This is one of the 2 subunits of the biotin-dependent propionyl-CoA carboxylase (PCC), the enzyme catalyzing the carboxylation of propionyl-CoA/propanoyl-CoA to D-methylmalonyl-CoA/(S)-methylmalonyl-CoA (PubMed:20725044). Within the holoenzyme, the alpha subunit catalyzes the ATP-dependent carboxylation of the biotin carried by the biotin carboxyl carrier (BCC) domain, while the beta subunit then tranfers the carboxyl group from carboxylated biotin to propionyl-CoA (Probable).</text>
</comment>
<comment type="catalytic activity">
    <reaction evidence="5">
        <text>propanoyl-CoA + hydrogencarbonate + ATP = (S)-methylmalonyl-CoA + ADP + phosphate + H(+)</text>
        <dbReference type="Rhea" id="RHEA:23720"/>
        <dbReference type="ChEBI" id="CHEBI:15378"/>
        <dbReference type="ChEBI" id="CHEBI:17544"/>
        <dbReference type="ChEBI" id="CHEBI:30616"/>
        <dbReference type="ChEBI" id="CHEBI:43474"/>
        <dbReference type="ChEBI" id="CHEBI:57327"/>
        <dbReference type="ChEBI" id="CHEBI:57392"/>
        <dbReference type="ChEBI" id="CHEBI:456216"/>
        <dbReference type="EC" id="6.4.1.3"/>
    </reaction>
    <physiologicalReaction direction="left-to-right" evidence="5">
        <dbReference type="Rhea" id="RHEA:23721"/>
    </physiologicalReaction>
</comment>
<comment type="cofactor">
    <cofactor evidence="2 3">
        <name>Mg(2+)</name>
        <dbReference type="ChEBI" id="CHEBI:18420"/>
    </cofactor>
    <cofactor evidence="2 3">
        <name>Mn(2+)</name>
        <dbReference type="ChEBI" id="CHEBI:29035"/>
    </cofactor>
    <text evidence="2 3">Binds 2 magnesium or manganese ions per subunit.</text>
</comment>
<comment type="cofactor">
    <cofactor evidence="4 5">
        <name>biotin</name>
        <dbReference type="ChEBI" id="CHEBI:57586"/>
    </cofactor>
</comment>
<comment type="pathway">
    <text evidence="6">Metabolic intermediate metabolism; propanoyl-CoA degradation; succinyl-CoA from propanoyl-CoA: step 1/3.</text>
</comment>
<comment type="subunit">
    <text evidence="5">The holoenzyme is a dodecamer composed of 6 PccA/alpha subunits and 6 PccB/beta subunits.</text>
</comment>
<comment type="interaction">
    <interactant intactId="EBI-9023176">
        <id>Q5LUF3</id>
    </interactant>
    <interactant intactId="EBI-15871336">
        <id>Q5LUG0</id>
        <label>pccB</label>
    </interactant>
    <organismsDiffer>false</organismsDiffer>
    <experiments>3</experiments>
</comment>
<comment type="interaction">
    <interactant intactId="EBI-9023176">
        <id>Q5LUF3</id>
    </interactant>
    <interactant intactId="EBI-9023183">
        <id>Q168G2</id>
        <label>pccB</label>
    </interactant>
    <organismsDiffer>true</organismsDiffer>
    <experiments>3</experiments>
</comment>
<comment type="domain">
    <text evidence="6">Consists of an N-terminal biotin carboxylation/carboxylase (BC) domain that catalyzes the transient carboxylation of the biotin covalently attached to the C-terminal biotinyl-binding/biotin carboxyl carrier (BCC) domain.</text>
</comment>
<comment type="PTM">
    <text evidence="5">The biotin cofactor is covalently attached to the C-terminal biotinyl-binding domain and is required for the catalytic activity.</text>
</comment>
<evidence type="ECO:0000250" key="1"/>
<evidence type="ECO:0000255" key="2">
    <source>
        <dbReference type="PROSITE-ProRule" id="PRU00409"/>
    </source>
</evidence>
<evidence type="ECO:0000255" key="3">
    <source>
        <dbReference type="PROSITE-ProRule" id="PRU00969"/>
    </source>
</evidence>
<evidence type="ECO:0000255" key="4">
    <source>
        <dbReference type="PROSITE-ProRule" id="PRU01066"/>
    </source>
</evidence>
<evidence type="ECO:0000269" key="5">
    <source>
    </source>
</evidence>
<evidence type="ECO:0000305" key="6">
    <source>
    </source>
</evidence>
<evidence type="ECO:0000312" key="7">
    <source>
        <dbReference type="EMBL" id="AAV94401.1"/>
    </source>
</evidence>
<evidence type="ECO:0007744" key="8">
    <source>
        <dbReference type="PDB" id="3N6R"/>
    </source>
</evidence>
<evidence type="ECO:0007829" key="9">
    <source>
        <dbReference type="PDB" id="3N6R"/>
    </source>
</evidence>